<sequence>MGTCLKGNMSVLSLVLFLLSVQQFWAQEDPLLPFSEHLDLEHNVQLKWGFDKIQGTILFQLSVNTSGWISFGLSPNGGMTGADIVIGGVDNKGTYFTDRHALGNSMPVVDQKQNYKLLSLSESDGKTVMKFQRSIESCDENDLPVTILPMKLIYAYGETDDISYHKAQRGTKEVNLLKYMPRASLSNATYFDITMENFMLPANQTYYHCKTARAPTFDSKQHIYRIEPVITNYDLVHHLLLYRCPPTVTEPLELECYTKTERCMETIAVWGVGGGDFEFPEVAGLPIGGNVGDFFYRLEVHYNNVNKTAGRVDSSGLRFYYTSKLRQHDAGILMTGLAVIPSYAIPPKAKSFLTYGMCDTTYIPKVLETANDLQVFSVMMHTHLAGRKVRVGHFREGKQIDLLAVDENYNFEFQQVTNLGKTKTVKLGDKLLVECTYNTENRNTLTQGGLSTSDEMCLAFLFYYPAMNLSGCESLPHFSSLVSEMGAGDTGTWLYMMNTMAWNDSSINEYQQTLKKINQTVIVVNSFNKASITNGTIPDLKVSPPEPCVRACATKNLAFMSLFLCLAGMWAS</sequence>
<comment type="cofactor">
    <cofactor evidence="1">
        <name>Cu(2+)</name>
        <dbReference type="ChEBI" id="CHEBI:29036"/>
    </cofactor>
    <text evidence="1">Binds 2 copper ions per subunit.</text>
</comment>
<comment type="subcellular location">
    <subcellularLocation>
        <location evidence="4">Membrane</location>
        <topology evidence="4">Single-pass type I membrane protein</topology>
    </subcellularLocation>
</comment>
<comment type="similarity">
    <text evidence="4">Belongs to the copper type II ascorbate-dependent monooxygenase family.</text>
</comment>
<comment type="sequence caution" evidence="4">
    <conflict type="erroneous initiation">
        <sequence resource="EMBL-CDS" id="AAH95821"/>
    </conflict>
    <text>Extended N-terminus.</text>
</comment>
<comment type="sequence caution" evidence="4">
    <conflict type="frameshift">
        <sequence resource="EMBL-CDS" id="AAH95821"/>
    </conflict>
</comment>
<comment type="sequence caution" evidence="4">
    <conflict type="erroneous initiation">
        <sequence resource="EMBL-CDS" id="AAI24116"/>
    </conflict>
</comment>
<comment type="sequence caution" evidence="4">
    <conflict type="erroneous initiation">
        <sequence resource="EMBL-CDS" id="AAI39650"/>
    </conflict>
</comment>
<comment type="sequence caution" evidence="4">
    <conflict type="erroneous initiation">
        <sequence resource="EMBL-CDS" id="CAI11757"/>
    </conflict>
</comment>
<organism>
    <name type="scientific">Danio rerio</name>
    <name type="common">Zebrafish</name>
    <name type="synonym">Brachydanio rerio</name>
    <dbReference type="NCBI Taxonomy" id="7955"/>
    <lineage>
        <taxon>Eukaryota</taxon>
        <taxon>Metazoa</taxon>
        <taxon>Chordata</taxon>
        <taxon>Craniata</taxon>
        <taxon>Vertebrata</taxon>
        <taxon>Euteleostomi</taxon>
        <taxon>Actinopterygii</taxon>
        <taxon>Neopterygii</taxon>
        <taxon>Teleostei</taxon>
        <taxon>Ostariophysi</taxon>
        <taxon>Cypriniformes</taxon>
        <taxon>Danionidae</taxon>
        <taxon>Danioninae</taxon>
        <taxon>Danio</taxon>
    </lineage>
</organism>
<gene>
    <name type="primary">moxd2</name>
    <name type="synonym">moxd1l</name>
    <name type="ORF">si:ch211-203k16.5</name>
</gene>
<dbReference type="EC" id="1.14.17.-"/>
<dbReference type="EMBL" id="AL845420">
    <property type="protein sequence ID" value="CAI11757.2"/>
    <property type="status" value="ALT_INIT"/>
    <property type="molecule type" value="Genomic_DNA"/>
</dbReference>
<dbReference type="EMBL" id="BX784041">
    <property type="protein sequence ID" value="CAI11757.2"/>
    <property type="status" value="JOINED"/>
    <property type="molecule type" value="Genomic_DNA"/>
</dbReference>
<dbReference type="EMBL" id="BX784041">
    <property type="protein sequence ID" value="CAM16827.1"/>
    <property type="molecule type" value="Genomic_DNA"/>
</dbReference>
<dbReference type="EMBL" id="AL845420">
    <property type="protein sequence ID" value="CAM16827.1"/>
    <property type="status" value="JOINED"/>
    <property type="molecule type" value="Genomic_DNA"/>
</dbReference>
<dbReference type="EMBL" id="BC095821">
    <property type="protein sequence ID" value="AAH95821.1"/>
    <property type="status" value="ALT_SEQ"/>
    <property type="molecule type" value="mRNA"/>
</dbReference>
<dbReference type="EMBL" id="BC124115">
    <property type="protein sequence ID" value="AAI24116.1"/>
    <property type="status" value="ALT_INIT"/>
    <property type="molecule type" value="mRNA"/>
</dbReference>
<dbReference type="EMBL" id="BC139649">
    <property type="protein sequence ID" value="AAI39650.1"/>
    <property type="status" value="ALT_INIT"/>
    <property type="molecule type" value="mRNA"/>
</dbReference>
<dbReference type="SMR" id="Q08CS6"/>
<dbReference type="STRING" id="7955.ENSDARP00000113999"/>
<dbReference type="GlyCosmos" id="Q08CS6">
    <property type="glycosylation" value="9 sites, No reported glycans"/>
</dbReference>
<dbReference type="PaxDb" id="7955-ENSDARP00000113999"/>
<dbReference type="AGR" id="ZFIN:ZDB-GENE-060126-3"/>
<dbReference type="ZFIN" id="ZDB-GENE-060126-3">
    <property type="gene designation" value="moxd1l"/>
</dbReference>
<dbReference type="eggNOG" id="KOG3568">
    <property type="taxonomic scope" value="Eukaryota"/>
</dbReference>
<dbReference type="InParanoid" id="Q08CS6"/>
<dbReference type="PhylomeDB" id="Q08CS6"/>
<dbReference type="TreeFam" id="TF320698"/>
<dbReference type="PRO" id="PR:Q08CS6"/>
<dbReference type="Proteomes" id="UP000000437">
    <property type="component" value="Unplaced"/>
</dbReference>
<dbReference type="GO" id="GO:0005615">
    <property type="term" value="C:extracellular space"/>
    <property type="evidence" value="ECO:0000318"/>
    <property type="project" value="GO_Central"/>
</dbReference>
<dbReference type="GO" id="GO:0030667">
    <property type="term" value="C:secretory granule membrane"/>
    <property type="evidence" value="ECO:0000318"/>
    <property type="project" value="GO_Central"/>
</dbReference>
<dbReference type="GO" id="GO:0005507">
    <property type="term" value="F:copper ion binding"/>
    <property type="evidence" value="ECO:0000318"/>
    <property type="project" value="GO_Central"/>
</dbReference>
<dbReference type="GO" id="GO:0004500">
    <property type="term" value="F:dopamine beta-monooxygenase activity"/>
    <property type="evidence" value="ECO:0000318"/>
    <property type="project" value="GO_Central"/>
</dbReference>
<dbReference type="GO" id="GO:0042420">
    <property type="term" value="P:dopamine catabolic process"/>
    <property type="evidence" value="ECO:0000318"/>
    <property type="project" value="GO_Central"/>
</dbReference>
<dbReference type="GO" id="GO:0042421">
    <property type="term" value="P:norepinephrine biosynthetic process"/>
    <property type="evidence" value="ECO:0000318"/>
    <property type="project" value="GO_Central"/>
</dbReference>
<dbReference type="GO" id="GO:0006589">
    <property type="term" value="P:octopamine biosynthetic process"/>
    <property type="evidence" value="ECO:0000318"/>
    <property type="project" value="GO_Central"/>
</dbReference>
<dbReference type="CDD" id="cd09631">
    <property type="entry name" value="DOMON_DOH"/>
    <property type="match status" value="1"/>
</dbReference>
<dbReference type="FunFam" id="2.60.120.230:FF:000001">
    <property type="entry name" value="Monooxygenase, DBH-like 1"/>
    <property type="match status" value="1"/>
</dbReference>
<dbReference type="FunFam" id="2.60.120.310:FF:000009">
    <property type="entry name" value="Monooxygenase, DBH-like 1, like"/>
    <property type="match status" value="1"/>
</dbReference>
<dbReference type="FunFam" id="2.60.40.1210:FF:000001">
    <property type="entry name" value="Monooxygenase, DBH-like 1, like"/>
    <property type="match status" value="1"/>
</dbReference>
<dbReference type="Gene3D" id="2.60.120.230">
    <property type="match status" value="1"/>
</dbReference>
<dbReference type="Gene3D" id="2.60.40.1210">
    <property type="entry name" value="Cellobiose dehydrogenase, cytochrome domain"/>
    <property type="match status" value="1"/>
</dbReference>
<dbReference type="Gene3D" id="2.60.120.310">
    <property type="entry name" value="Copper type II, ascorbate-dependent monooxygenase, N-terminal domain"/>
    <property type="match status" value="1"/>
</dbReference>
<dbReference type="InterPro" id="IPR014784">
    <property type="entry name" value="Cu2_ascorb_mOase-like_C"/>
</dbReference>
<dbReference type="InterPro" id="IPR000323">
    <property type="entry name" value="Cu2_ascorb_mOase_N"/>
</dbReference>
<dbReference type="InterPro" id="IPR036939">
    <property type="entry name" value="Cu2_ascorb_mOase_N_sf"/>
</dbReference>
<dbReference type="InterPro" id="IPR024548">
    <property type="entry name" value="Cu2_monoox_C"/>
</dbReference>
<dbReference type="InterPro" id="IPR000945">
    <property type="entry name" value="DBH-like"/>
</dbReference>
<dbReference type="InterPro" id="IPR045266">
    <property type="entry name" value="DOH_DOMON"/>
</dbReference>
<dbReference type="InterPro" id="IPR005018">
    <property type="entry name" value="DOMON_domain"/>
</dbReference>
<dbReference type="InterPro" id="IPR008977">
    <property type="entry name" value="PHM/PNGase_F_dom_sf"/>
</dbReference>
<dbReference type="InterPro" id="IPR028460">
    <property type="entry name" value="Tbh/DBH"/>
</dbReference>
<dbReference type="PANTHER" id="PTHR10157:SF41">
    <property type="entry name" value="DBH-LIKE MONOOXYGENASE PROTEIN 2 HOMOLOG"/>
    <property type="match status" value="1"/>
</dbReference>
<dbReference type="PANTHER" id="PTHR10157">
    <property type="entry name" value="DOPAMINE BETA HYDROXYLASE RELATED"/>
    <property type="match status" value="1"/>
</dbReference>
<dbReference type="Pfam" id="PF03712">
    <property type="entry name" value="Cu2_monoox_C"/>
    <property type="match status" value="1"/>
</dbReference>
<dbReference type="Pfam" id="PF01082">
    <property type="entry name" value="Cu2_monooxygen"/>
    <property type="match status" value="1"/>
</dbReference>
<dbReference type="Pfam" id="PF03351">
    <property type="entry name" value="DOMON"/>
    <property type="match status" value="1"/>
</dbReference>
<dbReference type="PRINTS" id="PR00767">
    <property type="entry name" value="DBMONOXGNASE"/>
</dbReference>
<dbReference type="SMART" id="SM00664">
    <property type="entry name" value="DoH"/>
    <property type="match status" value="1"/>
</dbReference>
<dbReference type="SUPFAM" id="SSF49344">
    <property type="entry name" value="CBD9-like"/>
    <property type="match status" value="1"/>
</dbReference>
<dbReference type="SUPFAM" id="SSF49742">
    <property type="entry name" value="PHM/PNGase F"/>
    <property type="match status" value="2"/>
</dbReference>
<dbReference type="PROSITE" id="PS50836">
    <property type="entry name" value="DOMON"/>
    <property type="match status" value="1"/>
</dbReference>
<evidence type="ECO:0000250" key="1"/>
<evidence type="ECO:0000255" key="2"/>
<evidence type="ECO:0000255" key="3">
    <source>
        <dbReference type="PROSITE-ProRule" id="PRU00246"/>
    </source>
</evidence>
<evidence type="ECO:0000305" key="4"/>
<accession>Q08CS6</accession>
<accession>A4QP47</accession>
<accession>Q501Y1</accession>
<accession>Q5SPP6</accession>
<name>MOXD2_DANRE</name>
<feature type="signal peptide" evidence="2">
    <location>
        <begin position="1"/>
        <end position="26"/>
    </location>
</feature>
<feature type="chain" id="PRO_0000305225" description="DBH-like monooxygenase protein 2 homolog">
    <location>
        <begin position="27"/>
        <end position="572"/>
    </location>
</feature>
<feature type="topological domain" description="Extracellular" evidence="2">
    <location>
        <begin position="27"/>
        <end position="552"/>
    </location>
</feature>
<feature type="transmembrane region" description="Helical" evidence="2">
    <location>
        <begin position="553"/>
        <end position="571"/>
    </location>
</feature>
<feature type="topological domain" description="Cytoplasmic" evidence="2">
    <location>
        <position position="572"/>
    </location>
</feature>
<feature type="domain" description="DOMON" evidence="3">
    <location>
        <begin position="42"/>
        <end position="157"/>
    </location>
</feature>
<feature type="active site" evidence="2">
    <location>
        <position position="207"/>
    </location>
</feature>
<feature type="active site" evidence="2">
    <location>
        <position position="381"/>
    </location>
</feature>
<feature type="binding site" evidence="1">
    <location>
        <position position="237"/>
    </location>
    <ligand>
        <name>Cu cation</name>
        <dbReference type="ChEBI" id="CHEBI:23378"/>
        <label>A</label>
    </ligand>
</feature>
<feature type="binding site" evidence="1">
    <location>
        <position position="238"/>
    </location>
    <ligand>
        <name>Cu cation</name>
        <dbReference type="ChEBI" id="CHEBI:23378"/>
        <label>A</label>
    </ligand>
</feature>
<feature type="binding site" evidence="1">
    <location>
        <position position="301"/>
    </location>
    <ligand>
        <name>Cu cation</name>
        <dbReference type="ChEBI" id="CHEBI:23378"/>
        <label>A</label>
    </ligand>
</feature>
<feature type="binding site" evidence="1">
    <location>
        <position position="381"/>
    </location>
    <ligand>
        <name>Cu cation</name>
        <dbReference type="ChEBI" id="CHEBI:23378"/>
        <label>B</label>
    </ligand>
</feature>
<feature type="binding site" evidence="1">
    <location>
        <position position="383"/>
    </location>
    <ligand>
        <name>Cu cation</name>
        <dbReference type="ChEBI" id="CHEBI:23378"/>
        <label>B</label>
    </ligand>
</feature>
<feature type="binding site" evidence="1">
    <location>
        <position position="456"/>
    </location>
    <ligand>
        <name>Cu cation</name>
        <dbReference type="ChEBI" id="CHEBI:23378"/>
        <label>B</label>
    </ligand>
</feature>
<feature type="glycosylation site" description="N-linked (GlcNAc...) asparagine" evidence="2">
    <location>
        <position position="8"/>
    </location>
</feature>
<feature type="glycosylation site" description="N-linked (GlcNAc...) asparagine" evidence="2">
    <location>
        <position position="64"/>
    </location>
</feature>
<feature type="glycosylation site" description="N-linked (GlcNAc...) asparagine" evidence="2">
    <location>
        <position position="187"/>
    </location>
</feature>
<feature type="glycosylation site" description="N-linked (GlcNAc...) asparagine" evidence="2">
    <location>
        <position position="203"/>
    </location>
</feature>
<feature type="glycosylation site" description="N-linked (GlcNAc...) asparagine" evidence="2">
    <location>
        <position position="306"/>
    </location>
</feature>
<feature type="glycosylation site" description="N-linked (GlcNAc...) asparagine" evidence="2">
    <location>
        <position position="468"/>
    </location>
</feature>
<feature type="glycosylation site" description="N-linked (GlcNAc...) asparagine" evidence="2">
    <location>
        <position position="503"/>
    </location>
</feature>
<feature type="glycosylation site" description="N-linked (GlcNAc...) asparagine" evidence="2">
    <location>
        <position position="518"/>
    </location>
</feature>
<feature type="glycosylation site" description="N-linked (GlcNAc...) asparagine" evidence="2">
    <location>
        <position position="534"/>
    </location>
</feature>
<feature type="disulfide bond" evidence="1">
    <location>
        <begin position="209"/>
        <end position="256"/>
    </location>
</feature>
<feature type="disulfide bond" evidence="1">
    <location>
        <begin position="244"/>
        <end position="263"/>
    </location>
</feature>
<feature type="disulfide bond" evidence="1">
    <location>
        <begin position="358"/>
        <end position="472"/>
    </location>
</feature>
<feature type="disulfide bond" evidence="1">
    <location>
        <begin position="435"/>
        <end position="457"/>
    </location>
</feature>
<feature type="sequence conflict" description="In Ref. 2; AAI24116." evidence="4" ref="2">
    <original>F</original>
    <variation>S</variation>
    <location>
        <position position="34"/>
    </location>
</feature>
<feature type="sequence conflict" description="In Ref. 2; AAH95821." evidence="4" ref="2">
    <original>I</original>
    <variation>L</variation>
    <location>
        <position position="84"/>
    </location>
</feature>
<feature type="sequence conflict" description="In Ref. 2; AAH95821/AAI39650." evidence="4" ref="2">
    <original>S</original>
    <variation>L</variation>
    <location>
        <position position="105"/>
    </location>
</feature>
<feature type="sequence conflict" description="In Ref. 2; AAI39650." evidence="4" ref="2">
    <original>T</original>
    <variation>A</variation>
    <location>
        <position position="194"/>
    </location>
</feature>
<feature type="sequence conflict" description="In Ref. 2; AAH95821." evidence="4" ref="2">
    <original>M</original>
    <variation>V</variation>
    <location>
        <position position="199"/>
    </location>
</feature>
<feature type="sequence conflict" description="In Ref. 2; AAH95821." evidence="4" ref="2">
    <original>R</original>
    <variation>K</variation>
    <location>
        <position position="213"/>
    </location>
</feature>
<feature type="sequence conflict" description="In Ref. 2; AAH95821." evidence="4" ref="2">
    <original>E</original>
    <variation>K</variation>
    <location>
        <position position="250"/>
    </location>
</feature>
<feature type="sequence conflict" description="In Ref. 2; AAH95821/AAI24116/AAI39650." evidence="4" ref="2">
    <original>T</original>
    <variation>I</variation>
    <location>
        <position position="260"/>
    </location>
</feature>
<feature type="sequence conflict" description="In Ref. 2; AAH95821." evidence="4" ref="2">
    <original>H</original>
    <variation>Q</variation>
    <location>
        <position position="393"/>
    </location>
</feature>
<feature type="sequence conflict" description="In Ref. 2; AAH95821." evidence="4" ref="2">
    <original>K</original>
    <variation>N</variation>
    <location>
        <position position="430"/>
    </location>
</feature>
<feature type="sequence conflict" description="In Ref. 2; AAH95821." evidence="4" ref="2">
    <location>
        <position position="458"/>
    </location>
</feature>
<feature type="sequence conflict" description="In Ref. 2; AAI39650." evidence="4" ref="2">
    <original>Y</original>
    <variation>H</variation>
    <location>
        <position position="463"/>
    </location>
</feature>
<feature type="sequence conflict" description="In Ref. 2; AAI24116." evidence="4" ref="2">
    <original>A</original>
    <variation>V</variation>
    <location>
        <position position="571"/>
    </location>
</feature>
<keyword id="KW-0186">Copper</keyword>
<keyword id="KW-1015">Disulfide bond</keyword>
<keyword id="KW-0325">Glycoprotein</keyword>
<keyword id="KW-0472">Membrane</keyword>
<keyword id="KW-0479">Metal-binding</keyword>
<keyword id="KW-0503">Monooxygenase</keyword>
<keyword id="KW-0560">Oxidoreductase</keyword>
<keyword id="KW-1185">Reference proteome</keyword>
<keyword id="KW-0732">Signal</keyword>
<keyword id="KW-0812">Transmembrane</keyword>
<keyword id="KW-1133">Transmembrane helix</keyword>
<proteinExistence type="evidence at transcript level"/>
<reference key="1">
    <citation type="journal article" date="2013" name="Nature">
        <title>The zebrafish reference genome sequence and its relationship to the human genome.</title>
        <authorList>
            <person name="Howe K."/>
            <person name="Clark M.D."/>
            <person name="Torroja C.F."/>
            <person name="Torrance J."/>
            <person name="Berthelot C."/>
            <person name="Muffato M."/>
            <person name="Collins J.E."/>
            <person name="Humphray S."/>
            <person name="McLaren K."/>
            <person name="Matthews L."/>
            <person name="McLaren S."/>
            <person name="Sealy I."/>
            <person name="Caccamo M."/>
            <person name="Churcher C."/>
            <person name="Scott C."/>
            <person name="Barrett J.C."/>
            <person name="Koch R."/>
            <person name="Rauch G.J."/>
            <person name="White S."/>
            <person name="Chow W."/>
            <person name="Kilian B."/>
            <person name="Quintais L.T."/>
            <person name="Guerra-Assuncao J.A."/>
            <person name="Zhou Y."/>
            <person name="Gu Y."/>
            <person name="Yen J."/>
            <person name="Vogel J.H."/>
            <person name="Eyre T."/>
            <person name="Redmond S."/>
            <person name="Banerjee R."/>
            <person name="Chi J."/>
            <person name="Fu B."/>
            <person name="Langley E."/>
            <person name="Maguire S.F."/>
            <person name="Laird G.K."/>
            <person name="Lloyd D."/>
            <person name="Kenyon E."/>
            <person name="Donaldson S."/>
            <person name="Sehra H."/>
            <person name="Almeida-King J."/>
            <person name="Loveland J."/>
            <person name="Trevanion S."/>
            <person name="Jones M."/>
            <person name="Quail M."/>
            <person name="Willey D."/>
            <person name="Hunt A."/>
            <person name="Burton J."/>
            <person name="Sims S."/>
            <person name="McLay K."/>
            <person name="Plumb B."/>
            <person name="Davis J."/>
            <person name="Clee C."/>
            <person name="Oliver K."/>
            <person name="Clark R."/>
            <person name="Riddle C."/>
            <person name="Elliot D."/>
            <person name="Threadgold G."/>
            <person name="Harden G."/>
            <person name="Ware D."/>
            <person name="Begum S."/>
            <person name="Mortimore B."/>
            <person name="Kerry G."/>
            <person name="Heath P."/>
            <person name="Phillimore B."/>
            <person name="Tracey A."/>
            <person name="Corby N."/>
            <person name="Dunn M."/>
            <person name="Johnson C."/>
            <person name="Wood J."/>
            <person name="Clark S."/>
            <person name="Pelan S."/>
            <person name="Griffiths G."/>
            <person name="Smith M."/>
            <person name="Glithero R."/>
            <person name="Howden P."/>
            <person name="Barker N."/>
            <person name="Lloyd C."/>
            <person name="Stevens C."/>
            <person name="Harley J."/>
            <person name="Holt K."/>
            <person name="Panagiotidis G."/>
            <person name="Lovell J."/>
            <person name="Beasley H."/>
            <person name="Henderson C."/>
            <person name="Gordon D."/>
            <person name="Auger K."/>
            <person name="Wright D."/>
            <person name="Collins J."/>
            <person name="Raisen C."/>
            <person name="Dyer L."/>
            <person name="Leung K."/>
            <person name="Robertson L."/>
            <person name="Ambridge K."/>
            <person name="Leongamornlert D."/>
            <person name="McGuire S."/>
            <person name="Gilderthorp R."/>
            <person name="Griffiths C."/>
            <person name="Manthravadi D."/>
            <person name="Nichol S."/>
            <person name="Barker G."/>
            <person name="Whitehead S."/>
            <person name="Kay M."/>
            <person name="Brown J."/>
            <person name="Murnane C."/>
            <person name="Gray E."/>
            <person name="Humphries M."/>
            <person name="Sycamore N."/>
            <person name="Barker D."/>
            <person name="Saunders D."/>
            <person name="Wallis J."/>
            <person name="Babbage A."/>
            <person name="Hammond S."/>
            <person name="Mashreghi-Mohammadi M."/>
            <person name="Barr L."/>
            <person name="Martin S."/>
            <person name="Wray P."/>
            <person name="Ellington A."/>
            <person name="Matthews N."/>
            <person name="Ellwood M."/>
            <person name="Woodmansey R."/>
            <person name="Clark G."/>
            <person name="Cooper J."/>
            <person name="Tromans A."/>
            <person name="Grafham D."/>
            <person name="Skuce C."/>
            <person name="Pandian R."/>
            <person name="Andrews R."/>
            <person name="Harrison E."/>
            <person name="Kimberley A."/>
            <person name="Garnett J."/>
            <person name="Fosker N."/>
            <person name="Hall R."/>
            <person name="Garner P."/>
            <person name="Kelly D."/>
            <person name="Bird C."/>
            <person name="Palmer S."/>
            <person name="Gehring I."/>
            <person name="Berger A."/>
            <person name="Dooley C.M."/>
            <person name="Ersan-Urun Z."/>
            <person name="Eser C."/>
            <person name="Geiger H."/>
            <person name="Geisler M."/>
            <person name="Karotki L."/>
            <person name="Kirn A."/>
            <person name="Konantz J."/>
            <person name="Konantz M."/>
            <person name="Oberlander M."/>
            <person name="Rudolph-Geiger S."/>
            <person name="Teucke M."/>
            <person name="Lanz C."/>
            <person name="Raddatz G."/>
            <person name="Osoegawa K."/>
            <person name="Zhu B."/>
            <person name="Rapp A."/>
            <person name="Widaa S."/>
            <person name="Langford C."/>
            <person name="Yang F."/>
            <person name="Schuster S.C."/>
            <person name="Carter N.P."/>
            <person name="Harrow J."/>
            <person name="Ning Z."/>
            <person name="Herrero J."/>
            <person name="Searle S.M."/>
            <person name="Enright A."/>
            <person name="Geisler R."/>
            <person name="Plasterk R.H."/>
            <person name="Lee C."/>
            <person name="Westerfield M."/>
            <person name="de Jong P.J."/>
            <person name="Zon L.I."/>
            <person name="Postlethwait J.H."/>
            <person name="Nusslein-Volhard C."/>
            <person name="Hubbard T.J."/>
            <person name="Roest Crollius H."/>
            <person name="Rogers J."/>
            <person name="Stemple D.L."/>
        </authorList>
    </citation>
    <scope>NUCLEOTIDE SEQUENCE [LARGE SCALE GENOMIC DNA]</scope>
    <source>
        <strain>Tuebingen</strain>
    </source>
</reference>
<reference key="2">
    <citation type="submission" date="2006-09" db="EMBL/GenBank/DDBJ databases">
        <authorList>
            <consortium name="NIH - Zebrafish Gene Collection (ZGC) project"/>
        </authorList>
    </citation>
    <scope>NUCLEOTIDE SEQUENCE [LARGE SCALE MRNA]</scope>
    <source>
        <tissue>Olfactory epithelium</tissue>
    </source>
</reference>
<protein>
    <recommendedName>
        <fullName>DBH-like monooxygenase protein 2 homolog</fullName>
        <ecNumber>1.14.17.-</ecNumber>
    </recommendedName>
</protein>